<proteinExistence type="evidence at transcript level"/>
<protein>
    <recommendedName>
        <fullName>Zinc finger C4H2 domain-containing protein</fullName>
    </recommendedName>
    <alternativeName>
        <fullName>Hepatocellular carcinoma-associated antigen 127 homolog</fullName>
    </alternativeName>
</protein>
<keyword id="KW-0025">Alternative splicing</keyword>
<keyword id="KW-1003">Cell membrane</keyword>
<keyword id="KW-0175">Coiled coil</keyword>
<keyword id="KW-0963">Cytoplasm</keyword>
<keyword id="KW-0217">Developmental protein</keyword>
<keyword id="KW-0221">Differentiation</keyword>
<keyword id="KW-0472">Membrane</keyword>
<keyword id="KW-0479">Metal-binding</keyword>
<keyword id="KW-0539">Nucleus</keyword>
<keyword id="KW-0628">Postsynaptic cell membrane</keyword>
<keyword id="KW-1185">Reference proteome</keyword>
<keyword id="KW-0770">Synapse</keyword>
<keyword id="KW-0862">Zinc</keyword>
<keyword id="KW-0863">Zinc-finger</keyword>
<comment type="function">
    <text evidence="1">Plays a role in interneurons differentiation. Involved in neuronal development and in neuromuscular junction formation.</text>
</comment>
<comment type="subcellular location">
    <subcellularLocation>
        <location evidence="1">Cytoplasm</location>
    </subcellularLocation>
    <subcellularLocation>
        <location evidence="1">Nucleus</location>
    </subcellularLocation>
    <subcellularLocation>
        <location evidence="1">Postsynaptic cell membrane</location>
    </subcellularLocation>
</comment>
<comment type="alternative products">
    <event type="alternative splicing"/>
    <isoform>
        <id>Q68FG0-1</id>
        <name>1</name>
        <sequence type="displayed"/>
    </isoform>
    <isoform>
        <id>Q68FG0-2</id>
        <name>2</name>
        <sequence type="described" ref="VSP_013470"/>
    </isoform>
</comment>
<comment type="tissue specificity">
    <text evidence="4">Expressed in embryonic and adult brain and spinal cord.</text>
</comment>
<comment type="developmental stage">
    <text evidence="4">In all brain areas, expression levels are high during embryonic development and decrease postanatally.</text>
</comment>
<comment type="sequence caution" evidence="6">
    <conflict type="erroneous initiation">
        <sequence resource="EMBL-CDS" id="BAC98112"/>
    </conflict>
</comment>
<organism>
    <name type="scientific">Mus musculus</name>
    <name type="common">Mouse</name>
    <dbReference type="NCBI Taxonomy" id="10090"/>
    <lineage>
        <taxon>Eukaryota</taxon>
        <taxon>Metazoa</taxon>
        <taxon>Chordata</taxon>
        <taxon>Craniata</taxon>
        <taxon>Vertebrata</taxon>
        <taxon>Euteleostomi</taxon>
        <taxon>Mammalia</taxon>
        <taxon>Eutheria</taxon>
        <taxon>Euarchontoglires</taxon>
        <taxon>Glires</taxon>
        <taxon>Rodentia</taxon>
        <taxon>Myomorpha</taxon>
        <taxon>Muroidea</taxon>
        <taxon>Muridae</taxon>
        <taxon>Murinae</taxon>
        <taxon>Mus</taxon>
        <taxon>Mus</taxon>
    </lineage>
</organism>
<reference key="1">
    <citation type="journal article" date="2003" name="DNA Res.">
        <title>Prediction of the coding sequences of mouse homologues of KIAA gene: III. The complete nucleotide sequences of 500 mouse KIAA-homologous cDNAs identified by screening of terminal sequences of cDNA clones randomly sampled from size-fractionated libraries.</title>
        <authorList>
            <person name="Okazaki N."/>
            <person name="Kikuno R."/>
            <person name="Ohara R."/>
            <person name="Inamoto S."/>
            <person name="Koseki H."/>
            <person name="Hiraoka S."/>
            <person name="Saga Y."/>
            <person name="Nagase T."/>
            <person name="Ohara O."/>
            <person name="Koga H."/>
        </authorList>
    </citation>
    <scope>NUCLEOTIDE SEQUENCE [LARGE SCALE MRNA] (ISOFORM 2)</scope>
    <source>
        <tissue>Embryonic tail</tissue>
    </source>
</reference>
<reference key="2">
    <citation type="journal article" date="2005" name="Science">
        <title>The transcriptional landscape of the mammalian genome.</title>
        <authorList>
            <person name="Carninci P."/>
            <person name="Kasukawa T."/>
            <person name="Katayama S."/>
            <person name="Gough J."/>
            <person name="Frith M.C."/>
            <person name="Maeda N."/>
            <person name="Oyama R."/>
            <person name="Ravasi T."/>
            <person name="Lenhard B."/>
            <person name="Wells C."/>
            <person name="Kodzius R."/>
            <person name="Shimokawa K."/>
            <person name="Bajic V.B."/>
            <person name="Brenner S.E."/>
            <person name="Batalov S."/>
            <person name="Forrest A.R."/>
            <person name="Zavolan M."/>
            <person name="Davis M.J."/>
            <person name="Wilming L.G."/>
            <person name="Aidinis V."/>
            <person name="Allen J.E."/>
            <person name="Ambesi-Impiombato A."/>
            <person name="Apweiler R."/>
            <person name="Aturaliya R.N."/>
            <person name="Bailey T.L."/>
            <person name="Bansal M."/>
            <person name="Baxter L."/>
            <person name="Beisel K.W."/>
            <person name="Bersano T."/>
            <person name="Bono H."/>
            <person name="Chalk A.M."/>
            <person name="Chiu K.P."/>
            <person name="Choudhary V."/>
            <person name="Christoffels A."/>
            <person name="Clutterbuck D.R."/>
            <person name="Crowe M.L."/>
            <person name="Dalla E."/>
            <person name="Dalrymple B.P."/>
            <person name="de Bono B."/>
            <person name="Della Gatta G."/>
            <person name="di Bernardo D."/>
            <person name="Down T."/>
            <person name="Engstrom P."/>
            <person name="Fagiolini M."/>
            <person name="Faulkner G."/>
            <person name="Fletcher C.F."/>
            <person name="Fukushima T."/>
            <person name="Furuno M."/>
            <person name="Futaki S."/>
            <person name="Gariboldi M."/>
            <person name="Georgii-Hemming P."/>
            <person name="Gingeras T.R."/>
            <person name="Gojobori T."/>
            <person name="Green R.E."/>
            <person name="Gustincich S."/>
            <person name="Harbers M."/>
            <person name="Hayashi Y."/>
            <person name="Hensch T.K."/>
            <person name="Hirokawa N."/>
            <person name="Hill D."/>
            <person name="Huminiecki L."/>
            <person name="Iacono M."/>
            <person name="Ikeo K."/>
            <person name="Iwama A."/>
            <person name="Ishikawa T."/>
            <person name="Jakt M."/>
            <person name="Kanapin A."/>
            <person name="Katoh M."/>
            <person name="Kawasawa Y."/>
            <person name="Kelso J."/>
            <person name="Kitamura H."/>
            <person name="Kitano H."/>
            <person name="Kollias G."/>
            <person name="Krishnan S.P."/>
            <person name="Kruger A."/>
            <person name="Kummerfeld S.K."/>
            <person name="Kurochkin I.V."/>
            <person name="Lareau L.F."/>
            <person name="Lazarevic D."/>
            <person name="Lipovich L."/>
            <person name="Liu J."/>
            <person name="Liuni S."/>
            <person name="McWilliam S."/>
            <person name="Madan Babu M."/>
            <person name="Madera M."/>
            <person name="Marchionni L."/>
            <person name="Matsuda H."/>
            <person name="Matsuzawa S."/>
            <person name="Miki H."/>
            <person name="Mignone F."/>
            <person name="Miyake S."/>
            <person name="Morris K."/>
            <person name="Mottagui-Tabar S."/>
            <person name="Mulder N."/>
            <person name="Nakano N."/>
            <person name="Nakauchi H."/>
            <person name="Ng P."/>
            <person name="Nilsson R."/>
            <person name="Nishiguchi S."/>
            <person name="Nishikawa S."/>
            <person name="Nori F."/>
            <person name="Ohara O."/>
            <person name="Okazaki Y."/>
            <person name="Orlando V."/>
            <person name="Pang K.C."/>
            <person name="Pavan W.J."/>
            <person name="Pavesi G."/>
            <person name="Pesole G."/>
            <person name="Petrovsky N."/>
            <person name="Piazza S."/>
            <person name="Reed J."/>
            <person name="Reid J.F."/>
            <person name="Ring B.Z."/>
            <person name="Ringwald M."/>
            <person name="Rost B."/>
            <person name="Ruan Y."/>
            <person name="Salzberg S.L."/>
            <person name="Sandelin A."/>
            <person name="Schneider C."/>
            <person name="Schoenbach C."/>
            <person name="Sekiguchi K."/>
            <person name="Semple C.A."/>
            <person name="Seno S."/>
            <person name="Sessa L."/>
            <person name="Sheng Y."/>
            <person name="Shibata Y."/>
            <person name="Shimada H."/>
            <person name="Shimada K."/>
            <person name="Silva D."/>
            <person name="Sinclair B."/>
            <person name="Sperling S."/>
            <person name="Stupka E."/>
            <person name="Sugiura K."/>
            <person name="Sultana R."/>
            <person name="Takenaka Y."/>
            <person name="Taki K."/>
            <person name="Tammoja K."/>
            <person name="Tan S.L."/>
            <person name="Tang S."/>
            <person name="Taylor M.S."/>
            <person name="Tegner J."/>
            <person name="Teichmann S.A."/>
            <person name="Ueda H.R."/>
            <person name="van Nimwegen E."/>
            <person name="Verardo R."/>
            <person name="Wei C.L."/>
            <person name="Yagi K."/>
            <person name="Yamanishi H."/>
            <person name="Zabarovsky E."/>
            <person name="Zhu S."/>
            <person name="Zimmer A."/>
            <person name="Hide W."/>
            <person name="Bult C."/>
            <person name="Grimmond S.M."/>
            <person name="Teasdale R.D."/>
            <person name="Liu E.T."/>
            <person name="Brusic V."/>
            <person name="Quackenbush J."/>
            <person name="Wahlestedt C."/>
            <person name="Mattick J.S."/>
            <person name="Hume D.A."/>
            <person name="Kai C."/>
            <person name="Sasaki D."/>
            <person name="Tomaru Y."/>
            <person name="Fukuda S."/>
            <person name="Kanamori-Katayama M."/>
            <person name="Suzuki M."/>
            <person name="Aoki J."/>
            <person name="Arakawa T."/>
            <person name="Iida J."/>
            <person name="Imamura K."/>
            <person name="Itoh M."/>
            <person name="Kato T."/>
            <person name="Kawaji H."/>
            <person name="Kawagashira N."/>
            <person name="Kawashima T."/>
            <person name="Kojima M."/>
            <person name="Kondo S."/>
            <person name="Konno H."/>
            <person name="Nakano K."/>
            <person name="Ninomiya N."/>
            <person name="Nishio T."/>
            <person name="Okada M."/>
            <person name="Plessy C."/>
            <person name="Shibata K."/>
            <person name="Shiraki T."/>
            <person name="Suzuki S."/>
            <person name="Tagami M."/>
            <person name="Waki K."/>
            <person name="Watahiki A."/>
            <person name="Okamura-Oho Y."/>
            <person name="Suzuki H."/>
            <person name="Kawai J."/>
            <person name="Hayashizaki Y."/>
        </authorList>
    </citation>
    <scope>NUCLEOTIDE SEQUENCE [LARGE SCALE MRNA]</scope>
    <source>
        <strain>C57BL/6J</strain>
        <strain>NOD</strain>
        <tissue>Dendritic cell</tissue>
    </source>
</reference>
<reference key="3">
    <citation type="journal article" date="2009" name="PLoS Biol.">
        <title>Lineage-specific biology revealed by a finished genome assembly of the mouse.</title>
        <authorList>
            <person name="Church D.M."/>
            <person name="Goodstadt L."/>
            <person name="Hillier L.W."/>
            <person name="Zody M.C."/>
            <person name="Goldstein S."/>
            <person name="She X."/>
            <person name="Bult C.J."/>
            <person name="Agarwala R."/>
            <person name="Cherry J.L."/>
            <person name="DiCuccio M."/>
            <person name="Hlavina W."/>
            <person name="Kapustin Y."/>
            <person name="Meric P."/>
            <person name="Maglott D."/>
            <person name="Birtle Z."/>
            <person name="Marques A.C."/>
            <person name="Graves T."/>
            <person name="Zhou S."/>
            <person name="Teague B."/>
            <person name="Potamousis K."/>
            <person name="Churas C."/>
            <person name="Place M."/>
            <person name="Herschleb J."/>
            <person name="Runnheim R."/>
            <person name="Forrest D."/>
            <person name="Amos-Landgraf J."/>
            <person name="Schwartz D.C."/>
            <person name="Cheng Z."/>
            <person name="Lindblad-Toh K."/>
            <person name="Eichler E.E."/>
            <person name="Ponting C.P."/>
        </authorList>
    </citation>
    <scope>NUCLEOTIDE SEQUENCE [LARGE SCALE GENOMIC DNA]</scope>
    <source>
        <strain>C57BL/6J</strain>
    </source>
</reference>
<reference key="4">
    <citation type="journal article" date="2004" name="Genome Res.">
        <title>The status, quality, and expansion of the NIH full-length cDNA project: the Mammalian Gene Collection (MGC).</title>
        <authorList>
            <consortium name="The MGC Project Team"/>
        </authorList>
    </citation>
    <scope>NUCLEOTIDE SEQUENCE [LARGE SCALE MRNA] (ISOFORM 1)</scope>
    <source>
        <strain>C57BL/6J</strain>
        <tissue>Embryonic brain</tissue>
        <tissue>Pancreas</tissue>
    </source>
</reference>
<reference key="5">
    <citation type="journal article" date="2013" name="Am. J. Hum. Genet.">
        <title>ZC4H2 mutations are associated with arthrogryposis multiplex congenita and intellectual disability through impairment of central and peripheral synaptic plasticity.</title>
        <authorList>
            <person name="Hirata H."/>
            <person name="Nanda I."/>
            <person name="van Riesen A."/>
            <person name="McMichael G."/>
            <person name="Hu H."/>
            <person name="Hambrock M."/>
            <person name="Papon M.A."/>
            <person name="Fischer U."/>
            <person name="Marouillat S."/>
            <person name="Ding C."/>
            <person name="Alirol S."/>
            <person name="Bienek M."/>
            <person name="Preisler-Adams S."/>
            <person name="Grimme A."/>
            <person name="Seelow D."/>
            <person name="Webster R."/>
            <person name="Haan E."/>
            <person name="Maclennan A."/>
            <person name="Stenzel W."/>
            <person name="Yap T.Y."/>
            <person name="Gardner A."/>
            <person name="Nguyen L.S."/>
            <person name="Shaw M."/>
            <person name="Lebrun N."/>
            <person name="Haas S.A."/>
            <person name="Kress W."/>
            <person name="Haaf T."/>
            <person name="Schellenberger E."/>
            <person name="Chelly J."/>
            <person name="Viot G."/>
            <person name="Shaffer L.G."/>
            <person name="Rosenfeld J.A."/>
            <person name="Kramer N."/>
            <person name="Falk R."/>
            <person name="El-Khechen D."/>
            <person name="Escobar L.F."/>
            <person name="Hennekam R."/>
            <person name="Wieacker P."/>
            <person name="Hubner C."/>
            <person name="Ropers H.H."/>
            <person name="Gecz J."/>
            <person name="Schuelke M."/>
            <person name="Laumonnier F."/>
            <person name="Kalscheuer V.M."/>
        </authorList>
    </citation>
    <scope>TISSUE SPECIFICITY</scope>
    <scope>DEVELOPMENTAL STAGE</scope>
</reference>
<sequence length="224" mass="26244">MADEQEIMCKLESIKEIRNKTLQMEKIKARLKAEFEALESEERHLKEYKQEMDLLLQEKMAHVEELRLIHADINVMENTIKQSENDLNKLLESTRRLHDEYKPLKEHVDALRMTLGLQRLPDLCEEEEKLSLDYFEKQKAEWQTEPQEPPIPESLAAAAAAAQQLQVARKQDTRQTATFRQQPPPMKACLSCHQQIHRNAPICPLCKAKSRSRNPKKPKRKQDE</sequence>
<accession>Q68FG0</accession>
<accession>B1AUU6</accession>
<accession>Q3TSJ9</accession>
<accession>Q3U274</accession>
<accession>Q504M3</accession>
<accession>Q6ZPW6</accession>
<name>ZC4H2_MOUSE</name>
<dbReference type="EMBL" id="AK129302">
    <property type="protein sequence ID" value="BAC98112.1"/>
    <property type="status" value="ALT_INIT"/>
    <property type="molecule type" value="mRNA"/>
</dbReference>
<dbReference type="EMBL" id="AK155445">
    <property type="protein sequence ID" value="BAE33268.1"/>
    <property type="molecule type" value="mRNA"/>
</dbReference>
<dbReference type="EMBL" id="AK162005">
    <property type="protein sequence ID" value="BAE36676.1"/>
    <property type="molecule type" value="mRNA"/>
</dbReference>
<dbReference type="EMBL" id="AL671982">
    <property type="status" value="NOT_ANNOTATED_CDS"/>
    <property type="molecule type" value="Genomic_DNA"/>
</dbReference>
<dbReference type="EMBL" id="BC079862">
    <property type="protein sequence ID" value="AAH79862.1"/>
    <property type="molecule type" value="mRNA"/>
</dbReference>
<dbReference type="EMBL" id="BC094942">
    <property type="protein sequence ID" value="AAH94942.1"/>
    <property type="molecule type" value="mRNA"/>
</dbReference>
<dbReference type="EMBL" id="BC119285">
    <property type="protein sequence ID" value="AAI19286.1"/>
    <property type="molecule type" value="mRNA"/>
</dbReference>
<dbReference type="EMBL" id="BC119311">
    <property type="protein sequence ID" value="AAI19312.1"/>
    <property type="molecule type" value="mRNA"/>
</dbReference>
<dbReference type="CCDS" id="CCDS30284.1">
    <molecule id="Q68FG0-1"/>
</dbReference>
<dbReference type="CCDS" id="CCDS81153.1">
    <molecule id="Q68FG0-2"/>
</dbReference>
<dbReference type="RefSeq" id="NP_001003916.1">
    <molecule id="Q68FG0-1"/>
    <property type="nucleotide sequence ID" value="NM_001003916.2"/>
</dbReference>
<dbReference type="RefSeq" id="NP_001276625.1">
    <property type="nucleotide sequence ID" value="NM_001289696.1"/>
</dbReference>
<dbReference type="RefSeq" id="NP_001276626.1">
    <molecule id="Q68FG0-2"/>
    <property type="nucleotide sequence ID" value="NM_001289697.1"/>
</dbReference>
<dbReference type="SMR" id="Q68FG0"/>
<dbReference type="BioGRID" id="232785">
    <property type="interactions" value="2"/>
</dbReference>
<dbReference type="FunCoup" id="Q68FG0">
    <property type="interactions" value="1071"/>
</dbReference>
<dbReference type="IntAct" id="Q68FG0">
    <property type="interactions" value="1"/>
</dbReference>
<dbReference type="STRING" id="10090.ENSMUSP00000041236"/>
<dbReference type="PhosphoSitePlus" id="Q68FG0"/>
<dbReference type="PaxDb" id="10090-ENSMUSP00000041236"/>
<dbReference type="ProteomicsDB" id="302114">
    <molecule id="Q68FG0-1"/>
</dbReference>
<dbReference type="ProteomicsDB" id="302115">
    <molecule id="Q68FG0-2"/>
</dbReference>
<dbReference type="Antibodypedia" id="27070">
    <property type="antibodies" value="101 antibodies from 18 providers"/>
</dbReference>
<dbReference type="DNASU" id="245522"/>
<dbReference type="Ensembl" id="ENSMUST00000044382.7">
    <molecule id="Q68FG0-1"/>
    <property type="protein sequence ID" value="ENSMUSP00000041236.7"/>
    <property type="gene ID" value="ENSMUSG00000035062.14"/>
</dbReference>
<dbReference type="Ensembl" id="ENSMUST00000119640.8">
    <molecule id="Q68FG0-2"/>
    <property type="protein sequence ID" value="ENSMUSP00000113689.2"/>
    <property type="gene ID" value="ENSMUSG00000035062.14"/>
</dbReference>
<dbReference type="GeneID" id="245522"/>
<dbReference type="KEGG" id="mmu:245522"/>
<dbReference type="UCSC" id="uc009ttz.2">
    <molecule id="Q68FG0-1"/>
    <property type="organism name" value="mouse"/>
</dbReference>
<dbReference type="UCSC" id="uc012hmh.2">
    <molecule id="Q68FG0-2"/>
    <property type="organism name" value="mouse"/>
</dbReference>
<dbReference type="AGR" id="MGI:2679294"/>
<dbReference type="CTD" id="55906"/>
<dbReference type="MGI" id="MGI:2679294">
    <property type="gene designation" value="Zc4h2"/>
</dbReference>
<dbReference type="VEuPathDB" id="HostDB:ENSMUSG00000035062"/>
<dbReference type="eggNOG" id="KOG4451">
    <property type="taxonomic scope" value="Eukaryota"/>
</dbReference>
<dbReference type="GeneTree" id="ENSGT00390000018389"/>
<dbReference type="HOGENOM" id="CLU_067420_0_0_1"/>
<dbReference type="InParanoid" id="Q68FG0"/>
<dbReference type="OMA" id="INMANRI"/>
<dbReference type="OrthoDB" id="20865at2759"/>
<dbReference type="PhylomeDB" id="Q68FG0"/>
<dbReference type="TreeFam" id="TF315275"/>
<dbReference type="BioGRID-ORCS" id="245522">
    <property type="hits" value="4 hits in 78 CRISPR screens"/>
</dbReference>
<dbReference type="PRO" id="PR:Q68FG0"/>
<dbReference type="Proteomes" id="UP000000589">
    <property type="component" value="Chromosome X"/>
</dbReference>
<dbReference type="RNAct" id="Q68FG0">
    <property type="molecule type" value="protein"/>
</dbReference>
<dbReference type="Bgee" id="ENSMUSG00000035062">
    <property type="expression patterns" value="Expressed in superior cervical ganglion and 218 other cell types or tissues"/>
</dbReference>
<dbReference type="ExpressionAtlas" id="Q68FG0">
    <property type="expression patterns" value="baseline and differential"/>
</dbReference>
<dbReference type="GO" id="GO:0005737">
    <property type="term" value="C:cytoplasm"/>
    <property type="evidence" value="ECO:0000250"/>
    <property type="project" value="UniProtKB"/>
</dbReference>
<dbReference type="GO" id="GO:0043025">
    <property type="term" value="C:neuronal cell body"/>
    <property type="evidence" value="ECO:0000314"/>
    <property type="project" value="MGI"/>
</dbReference>
<dbReference type="GO" id="GO:0005634">
    <property type="term" value="C:nucleus"/>
    <property type="evidence" value="ECO:0000250"/>
    <property type="project" value="UniProtKB"/>
</dbReference>
<dbReference type="GO" id="GO:0045211">
    <property type="term" value="C:postsynaptic membrane"/>
    <property type="evidence" value="ECO:0000250"/>
    <property type="project" value="UniProtKB"/>
</dbReference>
<dbReference type="GO" id="GO:0032991">
    <property type="term" value="C:protein-containing complex"/>
    <property type="evidence" value="ECO:0007669"/>
    <property type="project" value="Ensembl"/>
</dbReference>
<dbReference type="GO" id="GO:0008270">
    <property type="term" value="F:zinc ion binding"/>
    <property type="evidence" value="ECO:0007669"/>
    <property type="project" value="UniProtKB-KW"/>
</dbReference>
<dbReference type="GO" id="GO:0007399">
    <property type="term" value="P:nervous system development"/>
    <property type="evidence" value="ECO:0000250"/>
    <property type="project" value="UniProtKB"/>
</dbReference>
<dbReference type="GO" id="GO:0007528">
    <property type="term" value="P:neuromuscular junction development"/>
    <property type="evidence" value="ECO:0000250"/>
    <property type="project" value="UniProtKB"/>
</dbReference>
<dbReference type="GO" id="GO:0003358">
    <property type="term" value="P:noradrenergic neuron development"/>
    <property type="evidence" value="ECO:0000315"/>
    <property type="project" value="MGI"/>
</dbReference>
<dbReference type="GO" id="GO:0045666">
    <property type="term" value="P:positive regulation of neuron differentiation"/>
    <property type="evidence" value="ECO:0000250"/>
    <property type="project" value="UniProtKB"/>
</dbReference>
<dbReference type="GO" id="GO:0006513">
    <property type="term" value="P:protein monoubiquitination"/>
    <property type="evidence" value="ECO:0000316"/>
    <property type="project" value="MGI"/>
</dbReference>
<dbReference type="GO" id="GO:0021522">
    <property type="term" value="P:spinal cord motor neuron differentiation"/>
    <property type="evidence" value="ECO:0000250"/>
    <property type="project" value="UniProtKB"/>
</dbReference>
<dbReference type="InterPro" id="IPR044069">
    <property type="entry name" value="ZF_C4H2"/>
</dbReference>
<dbReference type="InterPro" id="IPR018482">
    <property type="entry name" value="Znf-C4H2"/>
</dbReference>
<dbReference type="PANTHER" id="PTHR31058">
    <property type="entry name" value="ZINC FINGER C4H2 DOMAIN-CONTAINING PROTEIN"/>
    <property type="match status" value="1"/>
</dbReference>
<dbReference type="PANTHER" id="PTHR31058:SF2">
    <property type="entry name" value="ZINC FINGER C4H2 DOMAIN-CONTAINING PROTEIN"/>
    <property type="match status" value="1"/>
</dbReference>
<dbReference type="Pfam" id="PF10146">
    <property type="entry name" value="zf-C4H2"/>
    <property type="match status" value="1"/>
</dbReference>
<dbReference type="PROSITE" id="PS51896">
    <property type="entry name" value="ZF_C4H2"/>
    <property type="match status" value="1"/>
</dbReference>
<evidence type="ECO:0000250" key="1">
    <source>
        <dbReference type="UniProtKB" id="Q9NQZ6"/>
    </source>
</evidence>
<evidence type="ECO:0000255" key="2"/>
<evidence type="ECO:0000255" key="3">
    <source>
        <dbReference type="PROSITE-ProRule" id="PRU01244"/>
    </source>
</evidence>
<evidence type="ECO:0000269" key="4">
    <source>
    </source>
</evidence>
<evidence type="ECO:0000303" key="5">
    <source>
    </source>
</evidence>
<evidence type="ECO:0000305" key="6"/>
<gene>
    <name type="primary">Zc4h2</name>
    <name type="synonym">Hca127</name>
    <name type="synonym">Kiaa1166</name>
</gene>
<feature type="chain" id="PRO_0000083912" description="Zinc finger C4H2 domain-containing protein">
    <location>
        <begin position="1"/>
        <end position="224"/>
    </location>
</feature>
<feature type="zinc finger region" description="C4H2-type" evidence="3">
    <location>
        <begin position="189"/>
        <end position="206"/>
    </location>
</feature>
<feature type="coiled-coil region" evidence="2">
    <location>
        <begin position="11"/>
        <end position="104"/>
    </location>
</feature>
<feature type="splice variant" id="VSP_013470" description="In isoform 2." evidence="5">
    <location>
        <begin position="76"/>
        <end position="82"/>
    </location>
</feature>
<feature type="sequence conflict" description="In Ref. 4; AAH94942." evidence="6" ref="4">
    <original>Q</original>
    <variation>R</variation>
    <location>
        <position position="50"/>
    </location>
</feature>
<feature type="sequence conflict" description="In Ref. 2; BAE33268." evidence="6" ref="2">
    <original>N</original>
    <variation>Y</variation>
    <location>
        <position position="214"/>
    </location>
</feature>